<reference key="1">
    <citation type="submission" date="2001-12" db="EMBL/GenBank/DDBJ databases">
        <title>Nucleotide sequence of cloned cDNA for a subunit of Cervus nippon follicle stimulating hormone.</title>
        <authorList>
            <person name="Li Q."/>
            <person name="Guan H."/>
            <person name="Zhang L."/>
        </authorList>
    </citation>
    <scope>NUCLEOTIDE SEQUENCE [MRNA]</scope>
</reference>
<proteinExistence type="evidence at transcript level"/>
<sequence>MDYYRKYAAVILAVLSLFLQILHSFPDGEFMMQGCPECKLKENKYFSKPDAPIYQCMGCCFSRAYPTPARSKKTMLVPKNITSEATCCVAKAFTKATVMGNVRVENHTDCHCSTCYYHKS</sequence>
<dbReference type="EMBL" id="AY066018">
    <property type="protein sequence ID" value="AAL57755.1"/>
    <property type="molecule type" value="mRNA"/>
</dbReference>
<dbReference type="SMR" id="Q8WMR3"/>
<dbReference type="GlyCosmos" id="Q8WMR3">
    <property type="glycosylation" value="2 sites, No reported glycans"/>
</dbReference>
<dbReference type="GO" id="GO:0005615">
    <property type="term" value="C:extracellular space"/>
    <property type="evidence" value="ECO:0000250"/>
    <property type="project" value="UniProtKB"/>
</dbReference>
<dbReference type="GO" id="GO:0016914">
    <property type="term" value="C:follicle-stimulating hormone complex"/>
    <property type="evidence" value="ECO:0000250"/>
    <property type="project" value="UniProtKB"/>
</dbReference>
<dbReference type="GO" id="GO:0016913">
    <property type="term" value="F:follicle-stimulating hormone activity"/>
    <property type="evidence" value="ECO:0000250"/>
    <property type="project" value="UniProtKB"/>
</dbReference>
<dbReference type="GO" id="GO:0007186">
    <property type="term" value="P:G protein-coupled receptor signaling pathway"/>
    <property type="evidence" value="ECO:0000250"/>
    <property type="project" value="UniProtKB"/>
</dbReference>
<dbReference type="GO" id="GO:0010893">
    <property type="term" value="P:positive regulation of steroid biosynthetic process"/>
    <property type="evidence" value="ECO:0000250"/>
    <property type="project" value="UniProtKB"/>
</dbReference>
<dbReference type="GO" id="GO:0010469">
    <property type="term" value="P:regulation of signaling receptor activity"/>
    <property type="evidence" value="ECO:0000250"/>
    <property type="project" value="UniProtKB"/>
</dbReference>
<dbReference type="GO" id="GO:0006590">
    <property type="term" value="P:thyroid hormone generation"/>
    <property type="evidence" value="ECO:0007669"/>
    <property type="project" value="TreeGrafter"/>
</dbReference>
<dbReference type="FunFam" id="2.10.90.10:FF:000011">
    <property type="entry name" value="Glycoprotein hormones alpha chain"/>
    <property type="match status" value="1"/>
</dbReference>
<dbReference type="Gene3D" id="2.10.90.10">
    <property type="entry name" value="Cystine-knot cytokines"/>
    <property type="match status" value="1"/>
</dbReference>
<dbReference type="InterPro" id="IPR029034">
    <property type="entry name" value="Cystine-knot_cytokine"/>
</dbReference>
<dbReference type="InterPro" id="IPR000476">
    <property type="entry name" value="Glyco_hormone"/>
</dbReference>
<dbReference type="PANTHER" id="PTHR11509">
    <property type="entry name" value="GLYCOPROTEIN HORMONE ALPHA CHAIN"/>
    <property type="match status" value="1"/>
</dbReference>
<dbReference type="PANTHER" id="PTHR11509:SF0">
    <property type="entry name" value="GLYCOPROTEIN HORMONES ALPHA CHAIN"/>
    <property type="match status" value="1"/>
</dbReference>
<dbReference type="Pfam" id="PF00236">
    <property type="entry name" value="Hormone_6"/>
    <property type="match status" value="1"/>
</dbReference>
<dbReference type="PRINTS" id="PR00274">
    <property type="entry name" value="GLYCOHORMONE"/>
</dbReference>
<dbReference type="SMART" id="SM00067">
    <property type="entry name" value="GHA"/>
    <property type="match status" value="1"/>
</dbReference>
<dbReference type="SUPFAM" id="SSF57501">
    <property type="entry name" value="Cystine-knot cytokines"/>
    <property type="match status" value="1"/>
</dbReference>
<dbReference type="PROSITE" id="PS00779">
    <property type="entry name" value="GLYCO_HORMONE_ALPHA_1"/>
    <property type="match status" value="1"/>
</dbReference>
<dbReference type="PROSITE" id="PS00780">
    <property type="entry name" value="GLYCO_HORMONE_ALPHA_2"/>
    <property type="match status" value="1"/>
</dbReference>
<dbReference type="PROSITE" id="PS50277">
    <property type="entry name" value="GLYCO_HORMONE_ALPHA_3"/>
    <property type="match status" value="1"/>
</dbReference>
<evidence type="ECO:0000250" key="1"/>
<evidence type="ECO:0000250" key="2">
    <source>
        <dbReference type="UniProtKB" id="P01215"/>
    </source>
</evidence>
<evidence type="ECO:0000305" key="3"/>
<gene>
    <name type="primary">CGA</name>
</gene>
<keyword id="KW-1015">Disulfide bond</keyword>
<keyword id="KW-0325">Glycoprotein</keyword>
<keyword id="KW-0372">Hormone</keyword>
<keyword id="KW-0964">Secreted</keyword>
<keyword id="KW-0732">Signal</keyword>
<comment type="function">
    <text evidence="2">Shared alpha chain of the active heterodimeric glycoprotein hormones thyrotropin/thyroid stimulating hormone/TSH, lutropin/luteinizing hormone/LH and follitropin/follicle stimulating hormone/FSH. These hormones bind specific receptors on target cells that in turn activate downstream signaling pathways.</text>
</comment>
<comment type="subunit">
    <text evidence="2">Heterodimer. The active hormones thyrotropin, lutropin and follitropin are heterodimers composed of CGA, a common alpha chain described here and a unique beta chain which confers their biological specificity to the hormones: TSHB for thyrotropin, LHB for lutropin and FSHB for follitropin.</text>
</comment>
<comment type="subcellular location">
    <subcellularLocation>
        <location evidence="2">Secreted</location>
    </subcellularLocation>
</comment>
<comment type="similarity">
    <text evidence="3">Belongs to the glycoprotein hormones subunit alpha family.</text>
</comment>
<feature type="signal peptide" evidence="1">
    <location>
        <begin position="1"/>
        <end position="24"/>
    </location>
</feature>
<feature type="chain" id="PRO_0000042875" description="Glycoprotein hormones alpha chain">
    <location>
        <begin position="25"/>
        <end position="120"/>
    </location>
</feature>
<feature type="glycosylation site" description="N-linked (GlcNAc...) asparagine" evidence="2">
    <location>
        <position position="80"/>
    </location>
</feature>
<feature type="glycosylation site" description="N-linked (GlcNAc...) asparagine" evidence="2">
    <location>
        <position position="106"/>
    </location>
</feature>
<feature type="disulfide bond" evidence="2">
    <location>
        <begin position="35"/>
        <end position="59"/>
    </location>
</feature>
<feature type="disulfide bond" evidence="2">
    <location>
        <begin position="38"/>
        <end position="88"/>
    </location>
</feature>
<feature type="disulfide bond" evidence="2">
    <location>
        <begin position="56"/>
        <end position="110"/>
    </location>
</feature>
<feature type="disulfide bond" evidence="2">
    <location>
        <begin position="60"/>
        <end position="112"/>
    </location>
</feature>
<feature type="disulfide bond" evidence="2">
    <location>
        <begin position="87"/>
        <end position="115"/>
    </location>
</feature>
<protein>
    <recommendedName>
        <fullName>Glycoprotein hormones alpha chain</fullName>
    </recommendedName>
    <alternativeName>
        <fullName>Anterior pituitary glycoprotein hormones common subunit alpha</fullName>
    </alternativeName>
    <alternativeName>
        <fullName>Follicle-stimulating hormone alpha chain</fullName>
        <shortName>FSH-alpha</shortName>
    </alternativeName>
    <alternativeName>
        <fullName>Follitropin alpha chain</fullName>
    </alternativeName>
    <alternativeName>
        <fullName>Luteinizing hormone alpha chain</fullName>
        <shortName>LSH-alpha</shortName>
    </alternativeName>
    <alternativeName>
        <fullName>Lutropin alpha chain</fullName>
    </alternativeName>
    <alternativeName>
        <fullName>Thyroid-stimulating hormone alpha chain</fullName>
        <shortName>TSH-alpha</shortName>
    </alternativeName>
    <alternativeName>
        <fullName>Thyrotropin alpha chain</fullName>
    </alternativeName>
</protein>
<organism>
    <name type="scientific">Cervus nippon</name>
    <name type="common">Sika deer</name>
    <dbReference type="NCBI Taxonomy" id="9863"/>
    <lineage>
        <taxon>Eukaryota</taxon>
        <taxon>Metazoa</taxon>
        <taxon>Chordata</taxon>
        <taxon>Craniata</taxon>
        <taxon>Vertebrata</taxon>
        <taxon>Euteleostomi</taxon>
        <taxon>Mammalia</taxon>
        <taxon>Eutheria</taxon>
        <taxon>Laurasiatheria</taxon>
        <taxon>Artiodactyla</taxon>
        <taxon>Ruminantia</taxon>
        <taxon>Pecora</taxon>
        <taxon>Cervidae</taxon>
        <taxon>Cervinae</taxon>
        <taxon>Cervus</taxon>
    </lineage>
</organism>
<accession>Q8WMR3</accession>
<name>GLHA_CERNI</name>